<dbReference type="EC" id="2.1.1.170" evidence="1"/>
<dbReference type="EMBL" id="FM200053">
    <property type="protein sequence ID" value="CAR61742.1"/>
    <property type="molecule type" value="Genomic_DNA"/>
</dbReference>
<dbReference type="RefSeq" id="WP_001519938.1">
    <property type="nucleotide sequence ID" value="NC_011147.1"/>
</dbReference>
<dbReference type="SMR" id="B5BIP4"/>
<dbReference type="KEGG" id="sek:SSPA3467"/>
<dbReference type="HOGENOM" id="CLU_065341_2_2_6"/>
<dbReference type="Proteomes" id="UP000001869">
    <property type="component" value="Chromosome"/>
</dbReference>
<dbReference type="GO" id="GO:0005829">
    <property type="term" value="C:cytosol"/>
    <property type="evidence" value="ECO:0007669"/>
    <property type="project" value="TreeGrafter"/>
</dbReference>
<dbReference type="GO" id="GO:0070043">
    <property type="term" value="F:rRNA (guanine-N7-)-methyltransferase activity"/>
    <property type="evidence" value="ECO:0007669"/>
    <property type="project" value="UniProtKB-UniRule"/>
</dbReference>
<dbReference type="CDD" id="cd02440">
    <property type="entry name" value="AdoMet_MTases"/>
    <property type="match status" value="1"/>
</dbReference>
<dbReference type="FunFam" id="3.40.50.150:FF:000032">
    <property type="entry name" value="Ribosomal RNA small subunit methyltransferase G"/>
    <property type="match status" value="1"/>
</dbReference>
<dbReference type="Gene3D" id="3.40.50.150">
    <property type="entry name" value="Vaccinia Virus protein VP39"/>
    <property type="match status" value="1"/>
</dbReference>
<dbReference type="HAMAP" id="MF_00074">
    <property type="entry name" value="16SrRNA_methyltr_G"/>
    <property type="match status" value="1"/>
</dbReference>
<dbReference type="InterPro" id="IPR003682">
    <property type="entry name" value="rRNA_ssu_MeTfrase_G"/>
</dbReference>
<dbReference type="InterPro" id="IPR029063">
    <property type="entry name" value="SAM-dependent_MTases_sf"/>
</dbReference>
<dbReference type="NCBIfam" id="TIGR00138">
    <property type="entry name" value="rsmG_gidB"/>
    <property type="match status" value="1"/>
</dbReference>
<dbReference type="PANTHER" id="PTHR31760">
    <property type="entry name" value="S-ADENOSYL-L-METHIONINE-DEPENDENT METHYLTRANSFERASES SUPERFAMILY PROTEIN"/>
    <property type="match status" value="1"/>
</dbReference>
<dbReference type="PANTHER" id="PTHR31760:SF0">
    <property type="entry name" value="S-ADENOSYL-L-METHIONINE-DEPENDENT METHYLTRANSFERASES SUPERFAMILY PROTEIN"/>
    <property type="match status" value="1"/>
</dbReference>
<dbReference type="Pfam" id="PF02527">
    <property type="entry name" value="GidB"/>
    <property type="match status" value="1"/>
</dbReference>
<dbReference type="PIRSF" id="PIRSF003078">
    <property type="entry name" value="GidB"/>
    <property type="match status" value="1"/>
</dbReference>
<dbReference type="SUPFAM" id="SSF53335">
    <property type="entry name" value="S-adenosyl-L-methionine-dependent methyltransferases"/>
    <property type="match status" value="1"/>
</dbReference>
<gene>
    <name evidence="1" type="primary">rsmG</name>
    <name type="ordered locus">SSPA3467</name>
</gene>
<name>RSMG_SALPK</name>
<sequence length="207" mass="23175">MLNKLSRLLADAGISLTDHQKTLLVAYVDMLHKWNKAYNLTSVRDPNEMLVRHILDSIVVAPYLQGQRFIDVGTGPGLPGIPLAIVLPDAHFTLLDSLGKRVRFLRQVQHELKLENITPVQSRVEAYPSEPPFDGVISRAFASLNDMVSWCHHLPGEKGRFYALKGQLPGDEIASLPDNFSVESVEKLRVPQLEGERHLVIIKSNKV</sequence>
<protein>
    <recommendedName>
        <fullName evidence="1">Ribosomal RNA small subunit methyltransferase G</fullName>
        <ecNumber evidence="1">2.1.1.170</ecNumber>
    </recommendedName>
    <alternativeName>
        <fullName evidence="1">16S rRNA 7-methylguanosine methyltransferase</fullName>
        <shortName evidence="1">16S rRNA m7G methyltransferase</shortName>
    </alternativeName>
</protein>
<reference key="1">
    <citation type="journal article" date="2009" name="BMC Genomics">
        <title>Pseudogene accumulation in the evolutionary histories of Salmonella enterica serovars Paratyphi A and Typhi.</title>
        <authorList>
            <person name="Holt K.E."/>
            <person name="Thomson N.R."/>
            <person name="Wain J."/>
            <person name="Langridge G.C."/>
            <person name="Hasan R."/>
            <person name="Bhutta Z.A."/>
            <person name="Quail M.A."/>
            <person name="Norbertczak H."/>
            <person name="Walker D."/>
            <person name="Simmonds M."/>
            <person name="White B."/>
            <person name="Bason N."/>
            <person name="Mungall K."/>
            <person name="Dougan G."/>
            <person name="Parkhill J."/>
        </authorList>
    </citation>
    <scope>NUCLEOTIDE SEQUENCE [LARGE SCALE GENOMIC DNA]</scope>
    <source>
        <strain>AKU_12601</strain>
    </source>
</reference>
<comment type="function">
    <text evidence="1">Specifically methylates the N7 position of guanine in position 527 of 16S rRNA.</text>
</comment>
<comment type="catalytic activity">
    <reaction evidence="1">
        <text>guanosine(527) in 16S rRNA + S-adenosyl-L-methionine = N(7)-methylguanosine(527) in 16S rRNA + S-adenosyl-L-homocysteine</text>
        <dbReference type="Rhea" id="RHEA:42732"/>
        <dbReference type="Rhea" id="RHEA-COMP:10209"/>
        <dbReference type="Rhea" id="RHEA-COMP:10210"/>
        <dbReference type="ChEBI" id="CHEBI:57856"/>
        <dbReference type="ChEBI" id="CHEBI:59789"/>
        <dbReference type="ChEBI" id="CHEBI:74269"/>
        <dbReference type="ChEBI" id="CHEBI:74480"/>
        <dbReference type="EC" id="2.1.1.170"/>
    </reaction>
</comment>
<comment type="subcellular location">
    <subcellularLocation>
        <location evidence="1">Cytoplasm</location>
    </subcellularLocation>
</comment>
<comment type="similarity">
    <text evidence="1">Belongs to the methyltransferase superfamily. RNA methyltransferase RsmG family.</text>
</comment>
<keyword id="KW-0963">Cytoplasm</keyword>
<keyword id="KW-0489">Methyltransferase</keyword>
<keyword id="KW-0698">rRNA processing</keyword>
<keyword id="KW-0949">S-adenosyl-L-methionine</keyword>
<keyword id="KW-0808">Transferase</keyword>
<feature type="chain" id="PRO_1000092651" description="Ribosomal RNA small subunit methyltransferase G">
    <location>
        <begin position="1"/>
        <end position="207"/>
    </location>
</feature>
<feature type="binding site" evidence="1">
    <location>
        <position position="73"/>
    </location>
    <ligand>
        <name>S-adenosyl-L-methionine</name>
        <dbReference type="ChEBI" id="CHEBI:59789"/>
    </ligand>
</feature>
<feature type="binding site" evidence="1">
    <location>
        <position position="78"/>
    </location>
    <ligand>
        <name>S-adenosyl-L-methionine</name>
        <dbReference type="ChEBI" id="CHEBI:59789"/>
    </ligand>
</feature>
<feature type="binding site" evidence="1">
    <location>
        <begin position="124"/>
        <end position="125"/>
    </location>
    <ligand>
        <name>S-adenosyl-L-methionine</name>
        <dbReference type="ChEBI" id="CHEBI:59789"/>
    </ligand>
</feature>
<feature type="binding site" evidence="1">
    <location>
        <position position="139"/>
    </location>
    <ligand>
        <name>S-adenosyl-L-methionine</name>
        <dbReference type="ChEBI" id="CHEBI:59789"/>
    </ligand>
</feature>
<organism>
    <name type="scientific">Salmonella paratyphi A (strain AKU_12601)</name>
    <dbReference type="NCBI Taxonomy" id="554290"/>
    <lineage>
        <taxon>Bacteria</taxon>
        <taxon>Pseudomonadati</taxon>
        <taxon>Pseudomonadota</taxon>
        <taxon>Gammaproteobacteria</taxon>
        <taxon>Enterobacterales</taxon>
        <taxon>Enterobacteriaceae</taxon>
        <taxon>Salmonella</taxon>
    </lineage>
</organism>
<evidence type="ECO:0000255" key="1">
    <source>
        <dbReference type="HAMAP-Rule" id="MF_00074"/>
    </source>
</evidence>
<accession>B5BIP4</accession>
<proteinExistence type="inferred from homology"/>